<gene>
    <name evidence="1" type="primary">atpG</name>
    <name type="ordered locus">SAHV_2088</name>
</gene>
<name>ATPG_STAA1</name>
<reference key="1">
    <citation type="journal article" date="2008" name="Antimicrob. Agents Chemother.">
        <title>Mutated response regulator graR is responsible for phenotypic conversion of Staphylococcus aureus from heterogeneous vancomycin-intermediate resistance to vancomycin-intermediate resistance.</title>
        <authorList>
            <person name="Neoh H.-M."/>
            <person name="Cui L."/>
            <person name="Yuzawa H."/>
            <person name="Takeuchi F."/>
            <person name="Matsuo M."/>
            <person name="Hiramatsu K."/>
        </authorList>
    </citation>
    <scope>NUCLEOTIDE SEQUENCE [LARGE SCALE GENOMIC DNA]</scope>
    <source>
        <strain>Mu3 / ATCC 700698</strain>
    </source>
</reference>
<feature type="chain" id="PRO_1000053345" description="ATP synthase gamma chain">
    <location>
        <begin position="1"/>
        <end position="288"/>
    </location>
</feature>
<proteinExistence type="inferred from homology"/>
<sequence>MASLKEIDTRIKSTKKMKQITKAMNMVSSSKLRRAEKNTKQFTPYMDKMQDAITAVAGASSNTNHPMLRPRKITRSGYLVITSDKGLAGAYSANVLKKLITDIEAKHQDSSEYSIVVLGQQGVDFLKNRGYDIEYSQVDVPDQPSFKSVQALANHAIDLYSEEEIDELNIYYSHYVSVLENKPTSRQVLPLSQEDSSKGHGHLSSYEFEPDKESILSVILPQYVESLIYGTILDAKASEHATRMTAMKNATDNATELIDDLSLEYNRARQAEITQQITEIVGGSAALE</sequence>
<evidence type="ECO:0000255" key="1">
    <source>
        <dbReference type="HAMAP-Rule" id="MF_00815"/>
    </source>
</evidence>
<protein>
    <recommendedName>
        <fullName evidence="1">ATP synthase gamma chain</fullName>
    </recommendedName>
    <alternativeName>
        <fullName evidence="1">ATP synthase F1 sector gamma subunit</fullName>
    </alternativeName>
    <alternativeName>
        <fullName evidence="1">F-ATPase gamma subunit</fullName>
    </alternativeName>
</protein>
<comment type="function">
    <text evidence="1">Produces ATP from ADP in the presence of a proton gradient across the membrane. The gamma chain is believed to be important in regulating ATPase activity and the flow of protons through the CF(0) complex.</text>
</comment>
<comment type="subunit">
    <text evidence="1">F-type ATPases have 2 components, CF(1) - the catalytic core - and CF(0) - the membrane proton channel. CF(1) has five subunits: alpha(3), beta(3), gamma(1), delta(1), epsilon(1). CF(0) has three main subunits: a, b and c.</text>
</comment>
<comment type="subcellular location">
    <subcellularLocation>
        <location evidence="1">Cell membrane</location>
        <topology evidence="1">Peripheral membrane protein</topology>
    </subcellularLocation>
</comment>
<comment type="similarity">
    <text evidence="1">Belongs to the ATPase gamma chain family.</text>
</comment>
<organism>
    <name type="scientific">Staphylococcus aureus (strain Mu3 / ATCC 700698)</name>
    <dbReference type="NCBI Taxonomy" id="418127"/>
    <lineage>
        <taxon>Bacteria</taxon>
        <taxon>Bacillati</taxon>
        <taxon>Bacillota</taxon>
        <taxon>Bacilli</taxon>
        <taxon>Bacillales</taxon>
        <taxon>Staphylococcaceae</taxon>
        <taxon>Staphylococcus</taxon>
    </lineage>
</organism>
<accession>A7X4U4</accession>
<keyword id="KW-0066">ATP synthesis</keyword>
<keyword id="KW-1003">Cell membrane</keyword>
<keyword id="KW-0139">CF(1)</keyword>
<keyword id="KW-0375">Hydrogen ion transport</keyword>
<keyword id="KW-0406">Ion transport</keyword>
<keyword id="KW-0472">Membrane</keyword>
<keyword id="KW-0813">Transport</keyword>
<dbReference type="EMBL" id="AP009324">
    <property type="protein sequence ID" value="BAF78971.1"/>
    <property type="molecule type" value="Genomic_DNA"/>
</dbReference>
<dbReference type="RefSeq" id="WP_000157603.1">
    <property type="nucleotide sequence ID" value="NZ_CTYB01000015.1"/>
</dbReference>
<dbReference type="SMR" id="A7X4U4"/>
<dbReference type="GeneID" id="98346411"/>
<dbReference type="KEGG" id="saw:SAHV_2088"/>
<dbReference type="HOGENOM" id="CLU_050669_0_1_9"/>
<dbReference type="GO" id="GO:0005886">
    <property type="term" value="C:plasma membrane"/>
    <property type="evidence" value="ECO:0007669"/>
    <property type="project" value="UniProtKB-SubCell"/>
</dbReference>
<dbReference type="GO" id="GO:0045259">
    <property type="term" value="C:proton-transporting ATP synthase complex"/>
    <property type="evidence" value="ECO:0007669"/>
    <property type="project" value="UniProtKB-KW"/>
</dbReference>
<dbReference type="GO" id="GO:0005524">
    <property type="term" value="F:ATP binding"/>
    <property type="evidence" value="ECO:0007669"/>
    <property type="project" value="UniProtKB-UniRule"/>
</dbReference>
<dbReference type="GO" id="GO:0046933">
    <property type="term" value="F:proton-transporting ATP synthase activity, rotational mechanism"/>
    <property type="evidence" value="ECO:0007669"/>
    <property type="project" value="UniProtKB-UniRule"/>
</dbReference>
<dbReference type="GO" id="GO:0042777">
    <property type="term" value="P:proton motive force-driven plasma membrane ATP synthesis"/>
    <property type="evidence" value="ECO:0007669"/>
    <property type="project" value="UniProtKB-UniRule"/>
</dbReference>
<dbReference type="CDD" id="cd12151">
    <property type="entry name" value="F1-ATPase_gamma"/>
    <property type="match status" value="1"/>
</dbReference>
<dbReference type="FunFam" id="1.10.287.80:FF:000019">
    <property type="entry name" value="ATP synthase gamma chain"/>
    <property type="match status" value="1"/>
</dbReference>
<dbReference type="FunFam" id="3.40.1380.10:FF:000002">
    <property type="entry name" value="ATP synthase gamma chain"/>
    <property type="match status" value="1"/>
</dbReference>
<dbReference type="Gene3D" id="3.40.1380.10">
    <property type="match status" value="1"/>
</dbReference>
<dbReference type="Gene3D" id="1.10.287.80">
    <property type="entry name" value="ATP synthase, gamma subunit, helix hairpin domain"/>
    <property type="match status" value="1"/>
</dbReference>
<dbReference type="HAMAP" id="MF_00815">
    <property type="entry name" value="ATP_synth_gamma_bact"/>
    <property type="match status" value="1"/>
</dbReference>
<dbReference type="InterPro" id="IPR035968">
    <property type="entry name" value="ATP_synth_F1_ATPase_gsu"/>
</dbReference>
<dbReference type="InterPro" id="IPR000131">
    <property type="entry name" value="ATP_synth_F1_gsu"/>
</dbReference>
<dbReference type="NCBIfam" id="TIGR01146">
    <property type="entry name" value="ATPsyn_F1gamma"/>
    <property type="match status" value="1"/>
</dbReference>
<dbReference type="PANTHER" id="PTHR11693">
    <property type="entry name" value="ATP SYNTHASE GAMMA CHAIN"/>
    <property type="match status" value="1"/>
</dbReference>
<dbReference type="PANTHER" id="PTHR11693:SF22">
    <property type="entry name" value="ATP SYNTHASE SUBUNIT GAMMA, MITOCHONDRIAL"/>
    <property type="match status" value="1"/>
</dbReference>
<dbReference type="Pfam" id="PF00231">
    <property type="entry name" value="ATP-synt"/>
    <property type="match status" value="1"/>
</dbReference>
<dbReference type="PRINTS" id="PR00126">
    <property type="entry name" value="ATPASEGAMMA"/>
</dbReference>
<dbReference type="SUPFAM" id="SSF52943">
    <property type="entry name" value="ATP synthase (F1-ATPase), gamma subunit"/>
    <property type="match status" value="1"/>
</dbReference>